<proteinExistence type="inferred from homology"/>
<reference key="1">
    <citation type="submission" date="2007-08" db="EMBL/GenBank/DDBJ databases">
        <authorList>
            <consortium name="The Vibrio harveyi Genome Sequencing Project"/>
            <person name="Bassler B."/>
            <person name="Clifton S.W."/>
            <person name="Fulton L."/>
            <person name="Delehaunty K."/>
            <person name="Fronick C."/>
            <person name="Harrison M."/>
            <person name="Markivic C."/>
            <person name="Fulton R."/>
            <person name="Tin-Wollam A.-M."/>
            <person name="Shah N."/>
            <person name="Pepin K."/>
            <person name="Nash W."/>
            <person name="Thiruvilangam P."/>
            <person name="Bhonagiri V."/>
            <person name="Waters C."/>
            <person name="Tu K.C."/>
            <person name="Irgon J."/>
            <person name="Wilson R.K."/>
        </authorList>
    </citation>
    <scope>NUCLEOTIDE SEQUENCE [LARGE SCALE GENOMIC DNA]</scope>
    <source>
        <strain>ATCC BAA-1116 / BB120</strain>
    </source>
</reference>
<name>RLMG_VIBC1</name>
<sequence>MKTELDLHDRSLTLHRFPKRSNETLQAWDAGDEYLINNVEGMALPDNQNIVVVNDNFGALACWFSDRHNVTLMSDSFISHKGAQQNLADNQCNQVSFLSTMDDIPENTDLVLMQLPKSNRHLVWLLSQLRKTLPASCPIVAVNKAKEIHTSTLKLFEKYLGETKTSLAWKKHRLVFSTANAQPVIDVDPMTIWGIEGEGIQLKNLPNVYSGESLDLGARFMLQHLPQDPTLKHVIDLGCGNGLLSVKMGQLNPQARLTSVDESFMAVESAKQNLLDNLGDARDIQCIANNCLDGFTPDCADMVMCNPPFHQQQAITDHIAWQMFCDAKQILNQGGKLLVIGNRHLGYDAKLKRLFGDKNVKLVASNNKFVILQATKNPAKLGAKQ</sequence>
<keyword id="KW-0963">Cytoplasm</keyword>
<keyword id="KW-0489">Methyltransferase</keyword>
<keyword id="KW-0698">rRNA processing</keyword>
<keyword id="KW-0949">S-adenosyl-L-methionine</keyword>
<keyword id="KW-0808">Transferase</keyword>
<organism>
    <name type="scientific">Vibrio campbellii (strain ATCC BAA-1116)</name>
    <dbReference type="NCBI Taxonomy" id="2902295"/>
    <lineage>
        <taxon>Bacteria</taxon>
        <taxon>Pseudomonadati</taxon>
        <taxon>Pseudomonadota</taxon>
        <taxon>Gammaproteobacteria</taxon>
        <taxon>Vibrionales</taxon>
        <taxon>Vibrionaceae</taxon>
        <taxon>Vibrio</taxon>
    </lineage>
</organism>
<comment type="function">
    <text evidence="1">Specifically methylates the guanine in position 1835 (m2G1835) of 23S rRNA.</text>
</comment>
<comment type="catalytic activity">
    <reaction evidence="1">
        <text>guanosine(1835) in 23S rRNA + S-adenosyl-L-methionine = N(2)-methylguanosine(1835) in 23S rRNA + S-adenosyl-L-homocysteine + H(+)</text>
        <dbReference type="Rhea" id="RHEA:42744"/>
        <dbReference type="Rhea" id="RHEA-COMP:10217"/>
        <dbReference type="Rhea" id="RHEA-COMP:10218"/>
        <dbReference type="ChEBI" id="CHEBI:15378"/>
        <dbReference type="ChEBI" id="CHEBI:57856"/>
        <dbReference type="ChEBI" id="CHEBI:59789"/>
        <dbReference type="ChEBI" id="CHEBI:74269"/>
        <dbReference type="ChEBI" id="CHEBI:74481"/>
        <dbReference type="EC" id="2.1.1.174"/>
    </reaction>
</comment>
<comment type="subcellular location">
    <subcellularLocation>
        <location evidence="1">Cytoplasm</location>
    </subcellularLocation>
</comment>
<comment type="similarity">
    <text evidence="1">Belongs to the methyltransferase superfamily. RlmG family.</text>
</comment>
<feature type="chain" id="PRO_0000366534" description="Ribosomal RNA large subunit methyltransferase G">
    <location>
        <begin position="1"/>
        <end position="385"/>
    </location>
</feature>
<gene>
    <name evidence="1" type="primary">rlmG</name>
    <name type="ordered locus">VIBHAR_03277</name>
</gene>
<dbReference type="EC" id="2.1.1.174" evidence="1"/>
<dbReference type="EMBL" id="CP000789">
    <property type="protein sequence ID" value="ABU72225.1"/>
    <property type="molecule type" value="Genomic_DNA"/>
</dbReference>
<dbReference type="RefSeq" id="WP_012128725.1">
    <property type="nucleotide sequence ID" value="NC_009783.1"/>
</dbReference>
<dbReference type="SMR" id="A7N1U8"/>
<dbReference type="KEGG" id="vha:VIBHAR_03277"/>
<dbReference type="PATRIC" id="fig|338187.36.peg.3204"/>
<dbReference type="Proteomes" id="UP000008152">
    <property type="component" value="Chromosome I"/>
</dbReference>
<dbReference type="GO" id="GO:0005737">
    <property type="term" value="C:cytoplasm"/>
    <property type="evidence" value="ECO:0007669"/>
    <property type="project" value="UniProtKB-SubCell"/>
</dbReference>
<dbReference type="GO" id="GO:0052916">
    <property type="term" value="F:23S rRNA (guanine(1835)-N(2))-methyltransferase activity"/>
    <property type="evidence" value="ECO:0007669"/>
    <property type="project" value="UniProtKB-EC"/>
</dbReference>
<dbReference type="CDD" id="cd02440">
    <property type="entry name" value="AdoMet_MTases"/>
    <property type="match status" value="1"/>
</dbReference>
<dbReference type="Gene3D" id="3.40.50.150">
    <property type="entry name" value="Vaccinia Virus protein VP39"/>
    <property type="match status" value="2"/>
</dbReference>
<dbReference type="HAMAP" id="MF_01859">
    <property type="entry name" value="23SrRNA_methyltr_G"/>
    <property type="match status" value="1"/>
</dbReference>
<dbReference type="InterPro" id="IPR017237">
    <property type="entry name" value="rRNA_m2G-MeTrfase_RlmG"/>
</dbReference>
<dbReference type="InterPro" id="IPR046977">
    <property type="entry name" value="RsmC/RlmG"/>
</dbReference>
<dbReference type="InterPro" id="IPR029063">
    <property type="entry name" value="SAM-dependent_MTases_sf"/>
</dbReference>
<dbReference type="InterPro" id="IPR007848">
    <property type="entry name" value="Small_mtfrase_dom"/>
</dbReference>
<dbReference type="PANTHER" id="PTHR47816:SF5">
    <property type="entry name" value="RIBOSOMAL RNA LARGE SUBUNIT METHYLTRANSFERASE G"/>
    <property type="match status" value="1"/>
</dbReference>
<dbReference type="PANTHER" id="PTHR47816">
    <property type="entry name" value="RIBOSOMAL RNA SMALL SUBUNIT METHYLTRANSFERASE C"/>
    <property type="match status" value="1"/>
</dbReference>
<dbReference type="Pfam" id="PF05175">
    <property type="entry name" value="MTS"/>
    <property type="match status" value="1"/>
</dbReference>
<dbReference type="PIRSF" id="PIRSF037565">
    <property type="entry name" value="RRNA_m2G_Mtase_RsmD_prd"/>
    <property type="match status" value="1"/>
</dbReference>
<dbReference type="SUPFAM" id="SSF53335">
    <property type="entry name" value="S-adenosyl-L-methionine-dependent methyltransferases"/>
    <property type="match status" value="1"/>
</dbReference>
<protein>
    <recommendedName>
        <fullName evidence="1">Ribosomal RNA large subunit methyltransferase G</fullName>
        <ecNumber evidence="1">2.1.1.174</ecNumber>
    </recommendedName>
    <alternativeName>
        <fullName evidence="1">23S rRNA m2G1835 methyltransferase</fullName>
    </alternativeName>
    <alternativeName>
        <fullName evidence="1">rRNA (guanine-N(2)-)-methyltransferase RlmG</fullName>
    </alternativeName>
</protein>
<accession>A7N1U8</accession>
<evidence type="ECO:0000255" key="1">
    <source>
        <dbReference type="HAMAP-Rule" id="MF_01859"/>
    </source>
</evidence>